<name>LYSK_SACI4</name>
<sequence length="346" mass="38769">MQQEKELVKQKAKELLLDLLSIYTPSKNETNATKFFEKISNEFNLKLEILPDSNSFILGEGEILLASHVDTVPGYIEPKIENEVIYGRGAVDAKGPLISMIIAAWLLNEKGIKVMVSGLADEESTSIGAKELTLKNFNFKHIIVGEPSNGTDIVVEYRGSIQLDIMCESTPEHSSSAKSNLIVDISKKIIEVYKQPENYDKPSIVPTIIRAGESYNVTPAKLYLHFDVRYAINNKRDDLINEIKDKFQECGLKIVDETPPVKVSINNPVVKSLTRALLKQNIKPRLVRKAGTSDMNILQKITTSIATYGPGNSMLEHTNQEKITLDEIYIGVKTYMLAIEELWQKS</sequence>
<dbReference type="EC" id="3.5.1.130" evidence="1"/>
<dbReference type="EC" id="3.5.1.132" evidence="1"/>
<dbReference type="EMBL" id="CP001400">
    <property type="protein sequence ID" value="ACP38720.1"/>
    <property type="molecule type" value="Genomic_DNA"/>
</dbReference>
<dbReference type="RefSeq" id="WP_012711946.1">
    <property type="nucleotide sequence ID" value="NC_012588.1"/>
</dbReference>
<dbReference type="SMR" id="C3MYT6"/>
<dbReference type="MEROPS" id="M20.975"/>
<dbReference type="KEGG" id="sia:M1425_1978"/>
<dbReference type="HOGENOM" id="CLU_021802_2_0_2"/>
<dbReference type="UniPathway" id="UPA00033">
    <property type="reaction ID" value="UER00039"/>
</dbReference>
<dbReference type="UniPathway" id="UPA00068"/>
<dbReference type="Proteomes" id="UP000001350">
    <property type="component" value="Chromosome"/>
</dbReference>
<dbReference type="GO" id="GO:0005737">
    <property type="term" value="C:cytoplasm"/>
    <property type="evidence" value="ECO:0007669"/>
    <property type="project" value="UniProtKB-SubCell"/>
</dbReference>
<dbReference type="GO" id="GO:0050897">
    <property type="term" value="F:cobalt ion binding"/>
    <property type="evidence" value="ECO:0007669"/>
    <property type="project" value="UniProtKB-UniRule"/>
</dbReference>
<dbReference type="GO" id="GO:0016811">
    <property type="term" value="F:hydrolase activity, acting on carbon-nitrogen (but not peptide) bonds, in linear amides"/>
    <property type="evidence" value="ECO:0007669"/>
    <property type="project" value="UniProtKB-UniRule"/>
</dbReference>
<dbReference type="GO" id="GO:0008270">
    <property type="term" value="F:zinc ion binding"/>
    <property type="evidence" value="ECO:0007669"/>
    <property type="project" value="UniProtKB-UniRule"/>
</dbReference>
<dbReference type="GO" id="GO:0042450">
    <property type="term" value="P:arginine biosynthetic process via ornithine"/>
    <property type="evidence" value="ECO:0007669"/>
    <property type="project" value="UniProtKB-UniRule"/>
</dbReference>
<dbReference type="GO" id="GO:0006526">
    <property type="term" value="P:L-arginine biosynthetic process"/>
    <property type="evidence" value="ECO:0007669"/>
    <property type="project" value="UniProtKB-UniPathway"/>
</dbReference>
<dbReference type="GO" id="GO:0019878">
    <property type="term" value="P:lysine biosynthetic process via aminoadipic acid"/>
    <property type="evidence" value="ECO:0007669"/>
    <property type="project" value="UniProtKB-UniRule"/>
</dbReference>
<dbReference type="CDD" id="cd05653">
    <property type="entry name" value="M20_ArgE_LysK"/>
    <property type="match status" value="1"/>
</dbReference>
<dbReference type="Gene3D" id="3.30.70.360">
    <property type="match status" value="1"/>
</dbReference>
<dbReference type="Gene3D" id="3.40.630.10">
    <property type="entry name" value="Zn peptidases"/>
    <property type="match status" value="1"/>
</dbReference>
<dbReference type="HAMAP" id="MF_01120">
    <property type="entry name" value="LysK"/>
    <property type="match status" value="1"/>
</dbReference>
<dbReference type="InterPro" id="IPR001261">
    <property type="entry name" value="ArgE/DapE_CS"/>
</dbReference>
<dbReference type="InterPro" id="IPR036264">
    <property type="entry name" value="Bact_exopeptidase_dim_dom"/>
</dbReference>
<dbReference type="InterPro" id="IPR010175">
    <property type="entry name" value="LysK"/>
</dbReference>
<dbReference type="InterPro" id="IPR002933">
    <property type="entry name" value="Peptidase_M20"/>
</dbReference>
<dbReference type="InterPro" id="IPR011650">
    <property type="entry name" value="Peptidase_M20_dimer"/>
</dbReference>
<dbReference type="InterPro" id="IPR050072">
    <property type="entry name" value="Peptidase_M20A"/>
</dbReference>
<dbReference type="NCBIfam" id="TIGR01902">
    <property type="entry name" value="dapE-lys-deAc"/>
    <property type="match status" value="1"/>
</dbReference>
<dbReference type="NCBIfam" id="NF001747">
    <property type="entry name" value="PRK00466.1"/>
    <property type="match status" value="1"/>
</dbReference>
<dbReference type="PANTHER" id="PTHR43808:SF28">
    <property type="entry name" value="[LYSW]-LYSINE_[LYSW]-ORNITHINE HYDROLASE"/>
    <property type="match status" value="1"/>
</dbReference>
<dbReference type="PANTHER" id="PTHR43808">
    <property type="entry name" value="ACETYLORNITHINE DEACETYLASE"/>
    <property type="match status" value="1"/>
</dbReference>
<dbReference type="Pfam" id="PF07687">
    <property type="entry name" value="M20_dimer"/>
    <property type="match status" value="1"/>
</dbReference>
<dbReference type="Pfam" id="PF01546">
    <property type="entry name" value="Peptidase_M20"/>
    <property type="match status" value="1"/>
</dbReference>
<dbReference type="SUPFAM" id="SSF55031">
    <property type="entry name" value="Bacterial exopeptidase dimerisation domain"/>
    <property type="match status" value="1"/>
</dbReference>
<dbReference type="SUPFAM" id="SSF53187">
    <property type="entry name" value="Zn-dependent exopeptidases"/>
    <property type="match status" value="1"/>
</dbReference>
<dbReference type="PROSITE" id="PS00758">
    <property type="entry name" value="ARGE_DAPE_CPG2_1"/>
    <property type="match status" value="1"/>
</dbReference>
<gene>
    <name evidence="1" type="primary">lysK</name>
    <name type="ordered locus">M1425_1978</name>
</gene>
<feature type="chain" id="PRO_1000213616" description="[LysW]-lysine/[LysW]-ornithine hydrolase">
    <location>
        <begin position="1"/>
        <end position="346"/>
    </location>
</feature>
<feature type="active site" evidence="1">
    <location>
        <position position="70"/>
    </location>
</feature>
<feature type="active site" description="Proton acceptor" evidence="1">
    <location>
        <position position="122"/>
    </location>
</feature>
<feature type="binding site" evidence="1">
    <location>
        <position position="68"/>
    </location>
    <ligand>
        <name>Zn(2+)</name>
        <dbReference type="ChEBI" id="CHEBI:29105"/>
        <label>1</label>
    </ligand>
</feature>
<feature type="binding site" evidence="1">
    <location>
        <position position="92"/>
    </location>
    <ligand>
        <name>Zn(2+)</name>
        <dbReference type="ChEBI" id="CHEBI:29105"/>
        <label>1</label>
    </ligand>
</feature>
<feature type="binding site" evidence="1">
    <location>
        <position position="92"/>
    </location>
    <ligand>
        <name>Zn(2+)</name>
        <dbReference type="ChEBI" id="CHEBI:29105"/>
        <label>2</label>
    </ligand>
</feature>
<feature type="binding site" evidence="1">
    <location>
        <position position="123"/>
    </location>
    <ligand>
        <name>Zn(2+)</name>
        <dbReference type="ChEBI" id="CHEBI:29105"/>
        <label>2</label>
    </ligand>
</feature>
<feature type="binding site" evidence="1">
    <location>
        <position position="146"/>
    </location>
    <ligand>
        <name>Zn(2+)</name>
        <dbReference type="ChEBI" id="CHEBI:29105"/>
        <label>1</label>
    </ligand>
</feature>
<feature type="binding site" evidence="1">
    <location>
        <position position="317"/>
    </location>
    <ligand>
        <name>Zn(2+)</name>
        <dbReference type="ChEBI" id="CHEBI:29105"/>
        <label>2</label>
    </ligand>
</feature>
<comment type="function">
    <text evidence="1">Catalyzes the release of L-lysine from [LysW]-gamma-L-lysine and the release of L-ornithine from [LysW]-L-ornithine.</text>
</comment>
<comment type="catalytic activity">
    <reaction evidence="1">
        <text>[amino-group carrier protein]-C-terminal-gamma-(L-lysyl)-L-glutamate + H2O = [amino-group carrier protein]-C-terminal-L-glutamate + L-lysine</text>
        <dbReference type="Rhea" id="RHEA:48684"/>
        <dbReference type="Rhea" id="RHEA-COMP:9693"/>
        <dbReference type="Rhea" id="RHEA-COMP:9715"/>
        <dbReference type="ChEBI" id="CHEBI:15377"/>
        <dbReference type="ChEBI" id="CHEBI:32551"/>
        <dbReference type="ChEBI" id="CHEBI:78525"/>
        <dbReference type="ChEBI" id="CHEBI:78526"/>
        <dbReference type="EC" id="3.5.1.130"/>
    </reaction>
</comment>
<comment type="catalytic activity">
    <reaction evidence="1">
        <text>[amino-group carrier protein]-C-terminal-gamma-(L-ornithyl)-L-glutamate + H2O = [amino-group carrier protein]-C-terminal-L-glutamate + L-ornithine</text>
        <dbReference type="Rhea" id="RHEA:52676"/>
        <dbReference type="Rhea" id="RHEA-COMP:9693"/>
        <dbReference type="Rhea" id="RHEA-COMP:13328"/>
        <dbReference type="ChEBI" id="CHEBI:15377"/>
        <dbReference type="ChEBI" id="CHEBI:46911"/>
        <dbReference type="ChEBI" id="CHEBI:78525"/>
        <dbReference type="ChEBI" id="CHEBI:136763"/>
        <dbReference type="EC" id="3.5.1.132"/>
    </reaction>
</comment>
<comment type="cofactor">
    <cofactor evidence="1">
        <name>Zn(2+)</name>
        <dbReference type="ChEBI" id="CHEBI:29105"/>
    </cofactor>
    <cofactor evidence="1">
        <name>Co(2+)</name>
        <dbReference type="ChEBI" id="CHEBI:48828"/>
    </cofactor>
    <text evidence="1">Binds 2 Zn(2+) or Co(2+) ions per subunit.</text>
</comment>
<comment type="pathway">
    <text evidence="1">Amino-acid biosynthesis; L-lysine biosynthesis via AAA pathway; L-lysine from L-alpha-aminoadipate (Thermus route): step 5/5.</text>
</comment>
<comment type="pathway">
    <text evidence="1">Amino-acid biosynthesis; L-arginine biosynthesis.</text>
</comment>
<comment type="subcellular location">
    <subcellularLocation>
        <location evidence="1">Cytoplasm</location>
    </subcellularLocation>
</comment>
<comment type="similarity">
    <text evidence="1">Belongs to the peptidase M20A family. LysK subfamily.</text>
</comment>
<protein>
    <recommendedName>
        <fullName evidence="1">[LysW]-lysine/[LysW]-ornithine hydrolase</fullName>
        <ecNumber evidence="1">3.5.1.130</ecNumber>
        <ecNumber evidence="1">3.5.1.132</ecNumber>
    </recommendedName>
</protein>
<proteinExistence type="inferred from homology"/>
<keyword id="KW-0028">Amino-acid biosynthesis</keyword>
<keyword id="KW-0055">Arginine biosynthesis</keyword>
<keyword id="KW-0170">Cobalt</keyword>
<keyword id="KW-0963">Cytoplasm</keyword>
<keyword id="KW-0378">Hydrolase</keyword>
<keyword id="KW-0457">Lysine biosynthesis</keyword>
<keyword id="KW-0479">Metal-binding</keyword>
<keyword id="KW-0862">Zinc</keyword>
<accession>C3MYT6</accession>
<evidence type="ECO:0000255" key="1">
    <source>
        <dbReference type="HAMAP-Rule" id="MF_01120"/>
    </source>
</evidence>
<reference key="1">
    <citation type="journal article" date="2009" name="Proc. Natl. Acad. Sci. U.S.A.">
        <title>Biogeography of the Sulfolobus islandicus pan-genome.</title>
        <authorList>
            <person name="Reno M.L."/>
            <person name="Held N.L."/>
            <person name="Fields C.J."/>
            <person name="Burke P.V."/>
            <person name="Whitaker R.J."/>
        </authorList>
    </citation>
    <scope>NUCLEOTIDE SEQUENCE [LARGE SCALE GENOMIC DNA]</scope>
    <source>
        <strain>M.14.25 / Kamchatka #1</strain>
    </source>
</reference>
<organism>
    <name type="scientific">Saccharolobus islandicus (strain M.14.25 / Kamchatka #1)</name>
    <name type="common">Sulfolobus islandicus</name>
    <dbReference type="NCBI Taxonomy" id="427317"/>
    <lineage>
        <taxon>Archaea</taxon>
        <taxon>Thermoproteota</taxon>
        <taxon>Thermoprotei</taxon>
        <taxon>Sulfolobales</taxon>
        <taxon>Sulfolobaceae</taxon>
        <taxon>Saccharolobus</taxon>
    </lineage>
</organism>